<comment type="function">
    <text evidence="2">One of the essential components for the initiation of protein synthesis. Protects formylmethionyl-tRNA from spontaneous hydrolysis and promotes its binding to the 30S ribosomal subunits. Also involved in the hydrolysis of GTP during the formation of the 70S ribosomal complex.</text>
</comment>
<comment type="subcellular location">
    <subcellularLocation>
        <location evidence="2">Cytoplasm</location>
    </subcellularLocation>
</comment>
<comment type="similarity">
    <text evidence="2">Belongs to the TRAFAC class translation factor GTPase superfamily. Classic translation factor GTPase family. IF-2 subfamily.</text>
</comment>
<keyword id="KW-0963">Cytoplasm</keyword>
<keyword id="KW-0342">GTP-binding</keyword>
<keyword id="KW-0396">Initiation factor</keyword>
<keyword id="KW-0547">Nucleotide-binding</keyword>
<keyword id="KW-0648">Protein biosynthesis</keyword>
<keyword id="KW-1185">Reference proteome</keyword>
<feature type="chain" id="PRO_1000118763" description="Translation initiation factor IF-2">
    <location>
        <begin position="1"/>
        <end position="908"/>
    </location>
</feature>
<feature type="domain" description="tr-type G">
    <location>
        <begin position="408"/>
        <end position="577"/>
    </location>
</feature>
<feature type="region of interest" description="Disordered" evidence="3">
    <location>
        <begin position="145"/>
        <end position="312"/>
    </location>
</feature>
<feature type="region of interest" description="G1" evidence="1">
    <location>
        <begin position="417"/>
        <end position="424"/>
    </location>
</feature>
<feature type="region of interest" description="G2" evidence="1">
    <location>
        <begin position="442"/>
        <end position="446"/>
    </location>
</feature>
<feature type="region of interest" description="G3" evidence="1">
    <location>
        <begin position="463"/>
        <end position="466"/>
    </location>
</feature>
<feature type="region of interest" description="G4" evidence="1">
    <location>
        <begin position="517"/>
        <end position="520"/>
    </location>
</feature>
<feature type="region of interest" description="G5" evidence="1">
    <location>
        <begin position="553"/>
        <end position="555"/>
    </location>
</feature>
<feature type="compositionally biased region" description="Basic and acidic residues" evidence="3">
    <location>
        <begin position="167"/>
        <end position="177"/>
    </location>
</feature>
<feature type="compositionally biased region" description="Low complexity" evidence="3">
    <location>
        <begin position="194"/>
        <end position="217"/>
    </location>
</feature>
<feature type="compositionally biased region" description="Low complexity" evidence="3">
    <location>
        <begin position="263"/>
        <end position="276"/>
    </location>
</feature>
<feature type="compositionally biased region" description="Basic and acidic residues" evidence="3">
    <location>
        <begin position="278"/>
        <end position="296"/>
    </location>
</feature>
<feature type="binding site" evidence="2">
    <location>
        <begin position="417"/>
        <end position="424"/>
    </location>
    <ligand>
        <name>GTP</name>
        <dbReference type="ChEBI" id="CHEBI:37565"/>
    </ligand>
</feature>
<feature type="binding site" evidence="2">
    <location>
        <begin position="463"/>
        <end position="467"/>
    </location>
    <ligand>
        <name>GTP</name>
        <dbReference type="ChEBI" id="CHEBI:37565"/>
    </ligand>
</feature>
<feature type="binding site" evidence="2">
    <location>
        <begin position="517"/>
        <end position="520"/>
    </location>
    <ligand>
        <name>GTP</name>
        <dbReference type="ChEBI" id="CHEBI:37565"/>
    </ligand>
</feature>
<name>IF2_GEODF</name>
<proteinExistence type="inferred from homology"/>
<protein>
    <recommendedName>
        <fullName evidence="2">Translation initiation factor IF-2</fullName>
    </recommendedName>
</protein>
<organism>
    <name type="scientific">Geotalea daltonii (strain DSM 22248 / JCM 15807 / FRC-32)</name>
    <name type="common">Geobacter daltonii</name>
    <dbReference type="NCBI Taxonomy" id="316067"/>
    <lineage>
        <taxon>Bacteria</taxon>
        <taxon>Pseudomonadati</taxon>
        <taxon>Thermodesulfobacteriota</taxon>
        <taxon>Desulfuromonadia</taxon>
        <taxon>Geobacterales</taxon>
        <taxon>Geobacteraceae</taxon>
        <taxon>Geotalea</taxon>
    </lineage>
</organism>
<reference key="1">
    <citation type="submission" date="2009-01" db="EMBL/GenBank/DDBJ databases">
        <title>Complete sequence of Geobacter sp. FRC-32.</title>
        <authorList>
            <consortium name="US DOE Joint Genome Institute"/>
            <person name="Lucas S."/>
            <person name="Copeland A."/>
            <person name="Lapidus A."/>
            <person name="Glavina del Rio T."/>
            <person name="Dalin E."/>
            <person name="Tice H."/>
            <person name="Bruce D."/>
            <person name="Goodwin L."/>
            <person name="Pitluck S."/>
            <person name="Saunders E."/>
            <person name="Brettin T."/>
            <person name="Detter J.C."/>
            <person name="Han C."/>
            <person name="Larimer F."/>
            <person name="Land M."/>
            <person name="Hauser L."/>
            <person name="Kyrpides N."/>
            <person name="Ovchinnikova G."/>
            <person name="Kostka J."/>
            <person name="Richardson P."/>
        </authorList>
    </citation>
    <scope>NUCLEOTIDE SEQUENCE [LARGE SCALE GENOMIC DNA]</scope>
    <source>
        <strain>DSM 22248 / JCM 15807 / FRC-32</strain>
    </source>
</reference>
<evidence type="ECO:0000250" key="1"/>
<evidence type="ECO:0000255" key="2">
    <source>
        <dbReference type="HAMAP-Rule" id="MF_00100"/>
    </source>
</evidence>
<evidence type="ECO:0000256" key="3">
    <source>
        <dbReference type="SAM" id="MobiDB-lite"/>
    </source>
</evidence>
<sequence>MSKTRVYELAQQMGIDNKELMAKLAAVGVEVKNHMAAIDDADIKKLSAPATVKEVSQEEVRVKPTLIRRRAKVVEAVAEEPPVEPKAEPAPAEVTTEKVAEKARVEEAPAPEAPVQAAEPVKIATEEAVPERATANKAKILGRVEIPGLTQRAKPPVQREAQPTARVVERPEARPSAERPAPGQRPEGQRPGQRPEGGYRPAGPRPAGQRPEGPRPGYTERPVTRGPERPGQARGPERPAPVVPLEMPPAGEDRRKGRKGKEVAGAGKKGPAGAAVPKRKEEFKKTELFEKHERVFEPGPRGKGKKRQAEKIQIGKKTEITVPKAIKRIIKISETITVGELAKRMGIKANDLIRALMKMGVMATINHALDFDTATILATDFGYEIENVALDIDEILESTPDTPESLVKRPPVVTIMGHVDHGKTSLLDAIRQTNVIAGEAGGITQHIGAYDVTLNGRKITFLDTPGHEAFTAMRARGAKVTDIVILVVAADDGVMPQTREAVNHSKAAGVPIIVAVNKIDKPEAKPERVKQELMELGLVSEEWGGETIFVDVSAKKRVNLPTLLEMVLLQADVLELKANEDKAARGTIVEAKLDKGRGPVATVLVQEGTLKVGDYFVAGIHFGRVRAMQNDRAEKVLSAGPSMPVEVIGFTGVPDAGDVFVALADEKQAKEIASLRQQKVRETELAKHSKLSLEQLYEKIQMGEVKDLNTIVKGDVQGSVEAVSESLRKLSTDAIRLNVIHASVGAITETDVNLATASNAIILGFNVRPEVKAQALAEKEGVDIRLYNIIYDAVDDIKKAMEGLLEPTLREKFLGRAEVRETFSVPKHGTVAGSYVLDGKMIRNSQVRLLRDNVVVFEGKMGSLRRFKDDVKEVASGYECGISIENYNDIKVGDIIESFEMEKVATKL</sequence>
<accession>B9M1G0</accession>
<dbReference type="EMBL" id="CP001390">
    <property type="protein sequence ID" value="ACM21042.1"/>
    <property type="molecule type" value="Genomic_DNA"/>
</dbReference>
<dbReference type="RefSeq" id="WP_012647770.1">
    <property type="nucleotide sequence ID" value="NC_011979.1"/>
</dbReference>
<dbReference type="SMR" id="B9M1G0"/>
<dbReference type="STRING" id="316067.Geob_2692"/>
<dbReference type="KEGG" id="geo:Geob_2692"/>
<dbReference type="eggNOG" id="COG0532">
    <property type="taxonomic scope" value="Bacteria"/>
</dbReference>
<dbReference type="HOGENOM" id="CLU_006301_6_0_7"/>
<dbReference type="OrthoDB" id="9811804at2"/>
<dbReference type="Proteomes" id="UP000007721">
    <property type="component" value="Chromosome"/>
</dbReference>
<dbReference type="GO" id="GO:0005829">
    <property type="term" value="C:cytosol"/>
    <property type="evidence" value="ECO:0007669"/>
    <property type="project" value="TreeGrafter"/>
</dbReference>
<dbReference type="GO" id="GO:0005525">
    <property type="term" value="F:GTP binding"/>
    <property type="evidence" value="ECO:0007669"/>
    <property type="project" value="UniProtKB-KW"/>
</dbReference>
<dbReference type="GO" id="GO:0003924">
    <property type="term" value="F:GTPase activity"/>
    <property type="evidence" value="ECO:0007669"/>
    <property type="project" value="UniProtKB-UniRule"/>
</dbReference>
<dbReference type="GO" id="GO:0003743">
    <property type="term" value="F:translation initiation factor activity"/>
    <property type="evidence" value="ECO:0007669"/>
    <property type="project" value="UniProtKB-UniRule"/>
</dbReference>
<dbReference type="CDD" id="cd01887">
    <property type="entry name" value="IF2_eIF5B"/>
    <property type="match status" value="1"/>
</dbReference>
<dbReference type="CDD" id="cd03702">
    <property type="entry name" value="IF2_mtIF2_II"/>
    <property type="match status" value="1"/>
</dbReference>
<dbReference type="CDD" id="cd03692">
    <property type="entry name" value="mtIF2_IVc"/>
    <property type="match status" value="1"/>
</dbReference>
<dbReference type="FunFam" id="2.40.30.10:FF:000007">
    <property type="entry name" value="Translation initiation factor IF-2"/>
    <property type="match status" value="1"/>
</dbReference>
<dbReference type="FunFam" id="2.40.30.10:FF:000008">
    <property type="entry name" value="Translation initiation factor IF-2"/>
    <property type="match status" value="1"/>
</dbReference>
<dbReference type="FunFam" id="3.40.50.10050:FF:000001">
    <property type="entry name" value="Translation initiation factor IF-2"/>
    <property type="match status" value="1"/>
</dbReference>
<dbReference type="FunFam" id="3.40.50.300:FF:000019">
    <property type="entry name" value="Translation initiation factor IF-2"/>
    <property type="match status" value="1"/>
</dbReference>
<dbReference type="Gene3D" id="1.10.10.2480">
    <property type="match status" value="1"/>
</dbReference>
<dbReference type="Gene3D" id="3.40.50.300">
    <property type="entry name" value="P-loop containing nucleotide triphosphate hydrolases"/>
    <property type="match status" value="1"/>
</dbReference>
<dbReference type="Gene3D" id="2.40.30.10">
    <property type="entry name" value="Translation factors"/>
    <property type="match status" value="2"/>
</dbReference>
<dbReference type="Gene3D" id="3.40.50.10050">
    <property type="entry name" value="Translation initiation factor IF- 2, domain 3"/>
    <property type="match status" value="1"/>
</dbReference>
<dbReference type="HAMAP" id="MF_00100_B">
    <property type="entry name" value="IF_2_B"/>
    <property type="match status" value="1"/>
</dbReference>
<dbReference type="InterPro" id="IPR053905">
    <property type="entry name" value="EF-G-like_DII"/>
</dbReference>
<dbReference type="InterPro" id="IPR004161">
    <property type="entry name" value="EFTu-like_2"/>
</dbReference>
<dbReference type="InterPro" id="IPR044145">
    <property type="entry name" value="IF2_II"/>
</dbReference>
<dbReference type="InterPro" id="IPR006847">
    <property type="entry name" value="IF2_N"/>
</dbReference>
<dbReference type="InterPro" id="IPR027417">
    <property type="entry name" value="P-loop_NTPase"/>
</dbReference>
<dbReference type="InterPro" id="IPR005225">
    <property type="entry name" value="Small_GTP-bd"/>
</dbReference>
<dbReference type="InterPro" id="IPR000795">
    <property type="entry name" value="T_Tr_GTP-bd_dom"/>
</dbReference>
<dbReference type="InterPro" id="IPR000178">
    <property type="entry name" value="TF_IF2_bacterial-like"/>
</dbReference>
<dbReference type="InterPro" id="IPR015760">
    <property type="entry name" value="TIF_IF2"/>
</dbReference>
<dbReference type="InterPro" id="IPR023115">
    <property type="entry name" value="TIF_IF2_dom3"/>
</dbReference>
<dbReference type="InterPro" id="IPR036925">
    <property type="entry name" value="TIF_IF2_dom3_sf"/>
</dbReference>
<dbReference type="InterPro" id="IPR009000">
    <property type="entry name" value="Transl_B-barrel_sf"/>
</dbReference>
<dbReference type="NCBIfam" id="TIGR00487">
    <property type="entry name" value="IF-2"/>
    <property type="match status" value="1"/>
</dbReference>
<dbReference type="NCBIfam" id="TIGR00231">
    <property type="entry name" value="small_GTP"/>
    <property type="match status" value="1"/>
</dbReference>
<dbReference type="PANTHER" id="PTHR43381:SF5">
    <property type="entry name" value="TR-TYPE G DOMAIN-CONTAINING PROTEIN"/>
    <property type="match status" value="1"/>
</dbReference>
<dbReference type="PANTHER" id="PTHR43381">
    <property type="entry name" value="TRANSLATION INITIATION FACTOR IF-2-RELATED"/>
    <property type="match status" value="1"/>
</dbReference>
<dbReference type="Pfam" id="PF22042">
    <property type="entry name" value="EF-G_D2"/>
    <property type="match status" value="1"/>
</dbReference>
<dbReference type="Pfam" id="PF00009">
    <property type="entry name" value="GTP_EFTU"/>
    <property type="match status" value="1"/>
</dbReference>
<dbReference type="Pfam" id="PF03144">
    <property type="entry name" value="GTP_EFTU_D2"/>
    <property type="match status" value="1"/>
</dbReference>
<dbReference type="Pfam" id="PF11987">
    <property type="entry name" value="IF-2"/>
    <property type="match status" value="1"/>
</dbReference>
<dbReference type="Pfam" id="PF04760">
    <property type="entry name" value="IF2_N"/>
    <property type="match status" value="2"/>
</dbReference>
<dbReference type="SUPFAM" id="SSF52156">
    <property type="entry name" value="Initiation factor IF2/eIF5b, domain 3"/>
    <property type="match status" value="1"/>
</dbReference>
<dbReference type="SUPFAM" id="SSF52540">
    <property type="entry name" value="P-loop containing nucleoside triphosphate hydrolases"/>
    <property type="match status" value="1"/>
</dbReference>
<dbReference type="SUPFAM" id="SSF50447">
    <property type="entry name" value="Translation proteins"/>
    <property type="match status" value="2"/>
</dbReference>
<dbReference type="PROSITE" id="PS51722">
    <property type="entry name" value="G_TR_2"/>
    <property type="match status" value="1"/>
</dbReference>
<dbReference type="PROSITE" id="PS01176">
    <property type="entry name" value="IF2"/>
    <property type="match status" value="1"/>
</dbReference>
<gene>
    <name evidence="2" type="primary">infB</name>
    <name type="ordered locus">Geob_2692</name>
</gene>